<organism>
    <name type="scientific">Mycobacterium avium (strain 104)</name>
    <dbReference type="NCBI Taxonomy" id="243243"/>
    <lineage>
        <taxon>Bacteria</taxon>
        <taxon>Bacillati</taxon>
        <taxon>Actinomycetota</taxon>
        <taxon>Actinomycetes</taxon>
        <taxon>Mycobacteriales</taxon>
        <taxon>Mycobacteriaceae</taxon>
        <taxon>Mycobacterium</taxon>
        <taxon>Mycobacterium avium complex (MAC)</taxon>
    </lineage>
</organism>
<reference key="1">
    <citation type="submission" date="2006-10" db="EMBL/GenBank/DDBJ databases">
        <authorList>
            <person name="Fleischmann R.D."/>
            <person name="Dodson R.J."/>
            <person name="Haft D.H."/>
            <person name="Merkel J.S."/>
            <person name="Nelson W.C."/>
            <person name="Fraser C.M."/>
        </authorList>
    </citation>
    <scope>NUCLEOTIDE SEQUENCE [LARGE SCALE GENOMIC DNA]</scope>
    <source>
        <strain>104</strain>
    </source>
</reference>
<protein>
    <recommendedName>
        <fullName>Putative S-adenosyl-L-methionine-dependent methyltransferase MAV_1058</fullName>
        <ecNumber>2.1.1.-</ecNumber>
    </recommendedName>
</protein>
<feature type="chain" id="PRO_0000361100" description="Putative S-adenosyl-L-methionine-dependent methyltransferase MAV_1058">
    <location>
        <begin position="1"/>
        <end position="304"/>
    </location>
</feature>
<feature type="binding site" evidence="1">
    <location>
        <position position="128"/>
    </location>
    <ligand>
        <name>S-adenosyl-L-methionine</name>
        <dbReference type="ChEBI" id="CHEBI:59789"/>
    </ligand>
</feature>
<feature type="binding site" evidence="1">
    <location>
        <begin position="157"/>
        <end position="158"/>
    </location>
    <ligand>
        <name>S-adenosyl-L-methionine</name>
        <dbReference type="ChEBI" id="CHEBI:59789"/>
    </ligand>
</feature>
<accession>A0QBM5</accession>
<comment type="function">
    <text evidence="1">Exhibits S-adenosyl-L-methionine-dependent methyltransferase activity.</text>
</comment>
<comment type="similarity">
    <text evidence="2">Belongs to the UPF0677 family.</text>
</comment>
<gene>
    <name type="ordered locus">MAV_1058</name>
</gene>
<dbReference type="EC" id="2.1.1.-"/>
<dbReference type="EMBL" id="CP000479">
    <property type="protein sequence ID" value="ABK65650.1"/>
    <property type="molecule type" value="Genomic_DNA"/>
</dbReference>
<dbReference type="RefSeq" id="WP_011723913.1">
    <property type="nucleotide sequence ID" value="NC_008595.1"/>
</dbReference>
<dbReference type="SMR" id="A0QBM5"/>
<dbReference type="KEGG" id="mav:MAV_1058"/>
<dbReference type="HOGENOM" id="CLU_056160_2_1_11"/>
<dbReference type="Proteomes" id="UP000001574">
    <property type="component" value="Chromosome"/>
</dbReference>
<dbReference type="GO" id="GO:0008168">
    <property type="term" value="F:methyltransferase activity"/>
    <property type="evidence" value="ECO:0007669"/>
    <property type="project" value="UniProtKB-KW"/>
</dbReference>
<dbReference type="GO" id="GO:0032259">
    <property type="term" value="P:methylation"/>
    <property type="evidence" value="ECO:0007669"/>
    <property type="project" value="UniProtKB-KW"/>
</dbReference>
<dbReference type="Gene3D" id="3.40.50.150">
    <property type="entry name" value="Vaccinia Virus protein VP39"/>
    <property type="match status" value="1"/>
</dbReference>
<dbReference type="InterPro" id="IPR007213">
    <property type="entry name" value="Ppm1/Ppm2/Tcmp"/>
</dbReference>
<dbReference type="InterPro" id="IPR029063">
    <property type="entry name" value="SAM-dependent_MTases_sf"/>
</dbReference>
<dbReference type="InterPro" id="IPR011610">
    <property type="entry name" value="SAM_mthyl_Trfase_ML2640-like"/>
</dbReference>
<dbReference type="NCBIfam" id="TIGR00027">
    <property type="entry name" value="mthyl_TIGR00027"/>
    <property type="match status" value="1"/>
</dbReference>
<dbReference type="PANTHER" id="PTHR43619">
    <property type="entry name" value="S-ADENOSYL-L-METHIONINE-DEPENDENT METHYLTRANSFERASE YKTD-RELATED"/>
    <property type="match status" value="1"/>
</dbReference>
<dbReference type="PANTHER" id="PTHR43619:SF2">
    <property type="entry name" value="S-ADENOSYL-L-METHIONINE-DEPENDENT METHYLTRANSFERASES SUPERFAMILY PROTEIN"/>
    <property type="match status" value="1"/>
</dbReference>
<dbReference type="Pfam" id="PF04072">
    <property type="entry name" value="LCM"/>
    <property type="match status" value="1"/>
</dbReference>
<dbReference type="SUPFAM" id="SSF53335">
    <property type="entry name" value="S-adenosyl-L-methionine-dependent methyltransferases"/>
    <property type="match status" value="1"/>
</dbReference>
<name>Y1058_MYCA1</name>
<evidence type="ECO:0000250" key="1"/>
<evidence type="ECO:0000305" key="2"/>
<proteinExistence type="inferred from homology"/>
<sequence>MTRSEGDTWNLASSVGATATMVAAARAAATRRPRPVLTDEYAEPLVRAVGLDVFTKLASGELDPDDLERDVGFARMVDTFAARGRFYDDYFAAAGKAGLRQVVIVASGLDARPYRLSWPAGTTVYEIDQPEVIAFKTATLSRIGAAPTAELRTIGIDLRQDWPAALQDAGFDAAQPTAWLAEGVLIGFLPPEAEVRLLDSITPLSAEGSRFAADYGSLNDASQASTEQARRTTEGWRRRGLDMDIAALTYPGKHTDVAAHLGADGWATTTFGLADLFAAAGLPELTEAEQGPAATLSFVRAIKS</sequence>
<keyword id="KW-0489">Methyltransferase</keyword>
<keyword id="KW-0949">S-adenosyl-L-methionine</keyword>
<keyword id="KW-0808">Transferase</keyword>